<evidence type="ECO:0000255" key="1">
    <source>
        <dbReference type="HAMAP-Rule" id="MF_00041"/>
    </source>
</evidence>
<gene>
    <name evidence="1" type="primary">cysS</name>
    <name type="ordered locus">OEOE_1559</name>
</gene>
<organism>
    <name type="scientific">Oenococcus oeni (strain ATCC BAA-331 / PSU-1)</name>
    <dbReference type="NCBI Taxonomy" id="203123"/>
    <lineage>
        <taxon>Bacteria</taxon>
        <taxon>Bacillati</taxon>
        <taxon>Bacillota</taxon>
        <taxon>Bacilli</taxon>
        <taxon>Lactobacillales</taxon>
        <taxon>Lactobacillaceae</taxon>
        <taxon>Oenococcus</taxon>
    </lineage>
</organism>
<comment type="catalytic activity">
    <reaction evidence="1">
        <text>tRNA(Cys) + L-cysteine + ATP = L-cysteinyl-tRNA(Cys) + AMP + diphosphate</text>
        <dbReference type="Rhea" id="RHEA:17773"/>
        <dbReference type="Rhea" id="RHEA-COMP:9661"/>
        <dbReference type="Rhea" id="RHEA-COMP:9679"/>
        <dbReference type="ChEBI" id="CHEBI:30616"/>
        <dbReference type="ChEBI" id="CHEBI:33019"/>
        <dbReference type="ChEBI" id="CHEBI:35235"/>
        <dbReference type="ChEBI" id="CHEBI:78442"/>
        <dbReference type="ChEBI" id="CHEBI:78517"/>
        <dbReference type="ChEBI" id="CHEBI:456215"/>
        <dbReference type="EC" id="6.1.1.16"/>
    </reaction>
</comment>
<comment type="cofactor">
    <cofactor evidence="1">
        <name>Zn(2+)</name>
        <dbReference type="ChEBI" id="CHEBI:29105"/>
    </cofactor>
    <text evidence="1">Binds 1 zinc ion per subunit.</text>
</comment>
<comment type="subunit">
    <text evidence="1">Monomer.</text>
</comment>
<comment type="subcellular location">
    <subcellularLocation>
        <location evidence="1">Cytoplasm</location>
    </subcellularLocation>
</comment>
<comment type="similarity">
    <text evidence="1">Belongs to the class-I aminoacyl-tRNA synthetase family.</text>
</comment>
<proteinExistence type="inferred from homology"/>
<protein>
    <recommendedName>
        <fullName evidence="1">Cysteine--tRNA ligase</fullName>
        <ecNumber evidence="1">6.1.1.16</ecNumber>
    </recommendedName>
    <alternativeName>
        <fullName evidence="1">Cysteinyl-tRNA synthetase</fullName>
        <shortName evidence="1">CysRS</shortName>
    </alternativeName>
</protein>
<keyword id="KW-0030">Aminoacyl-tRNA synthetase</keyword>
<keyword id="KW-0067">ATP-binding</keyword>
<keyword id="KW-0963">Cytoplasm</keyword>
<keyword id="KW-0436">Ligase</keyword>
<keyword id="KW-0479">Metal-binding</keyword>
<keyword id="KW-0547">Nucleotide-binding</keyword>
<keyword id="KW-0648">Protein biosynthesis</keyword>
<keyword id="KW-1185">Reference proteome</keyword>
<keyword id="KW-0862">Zinc</keyword>
<feature type="chain" id="PRO_1000199081" description="Cysteine--tRNA ligase">
    <location>
        <begin position="1"/>
        <end position="467"/>
    </location>
</feature>
<feature type="short sequence motif" description="'HIGH' region">
    <location>
        <begin position="30"/>
        <end position="40"/>
    </location>
</feature>
<feature type="short sequence motif" description="'KMSKS' region">
    <location>
        <begin position="269"/>
        <end position="273"/>
    </location>
</feature>
<feature type="binding site" evidence="1">
    <location>
        <position position="28"/>
    </location>
    <ligand>
        <name>Zn(2+)</name>
        <dbReference type="ChEBI" id="CHEBI:29105"/>
    </ligand>
</feature>
<feature type="binding site" evidence="1">
    <location>
        <position position="212"/>
    </location>
    <ligand>
        <name>Zn(2+)</name>
        <dbReference type="ChEBI" id="CHEBI:29105"/>
    </ligand>
</feature>
<feature type="binding site" evidence="1">
    <location>
        <position position="237"/>
    </location>
    <ligand>
        <name>Zn(2+)</name>
        <dbReference type="ChEBI" id="CHEBI:29105"/>
    </ligand>
</feature>
<feature type="binding site" evidence="1">
    <location>
        <position position="241"/>
    </location>
    <ligand>
        <name>Zn(2+)</name>
        <dbReference type="ChEBI" id="CHEBI:29105"/>
    </ligand>
</feature>
<feature type="binding site" evidence="1">
    <location>
        <position position="272"/>
    </location>
    <ligand>
        <name>ATP</name>
        <dbReference type="ChEBI" id="CHEBI:30616"/>
    </ligand>
</feature>
<reference key="1">
    <citation type="journal article" date="2006" name="Proc. Natl. Acad. Sci. U.S.A.">
        <title>Comparative genomics of the lactic acid bacteria.</title>
        <authorList>
            <person name="Makarova K.S."/>
            <person name="Slesarev A."/>
            <person name="Wolf Y.I."/>
            <person name="Sorokin A."/>
            <person name="Mirkin B."/>
            <person name="Koonin E.V."/>
            <person name="Pavlov A."/>
            <person name="Pavlova N."/>
            <person name="Karamychev V."/>
            <person name="Polouchine N."/>
            <person name="Shakhova V."/>
            <person name="Grigoriev I."/>
            <person name="Lou Y."/>
            <person name="Rohksar D."/>
            <person name="Lucas S."/>
            <person name="Huang K."/>
            <person name="Goodstein D.M."/>
            <person name="Hawkins T."/>
            <person name="Plengvidhya V."/>
            <person name="Welker D."/>
            <person name="Hughes J."/>
            <person name="Goh Y."/>
            <person name="Benson A."/>
            <person name="Baldwin K."/>
            <person name="Lee J.-H."/>
            <person name="Diaz-Muniz I."/>
            <person name="Dosti B."/>
            <person name="Smeianov V."/>
            <person name="Wechter W."/>
            <person name="Barabote R."/>
            <person name="Lorca G."/>
            <person name="Altermann E."/>
            <person name="Barrangou R."/>
            <person name="Ganesan B."/>
            <person name="Xie Y."/>
            <person name="Rawsthorne H."/>
            <person name="Tamir D."/>
            <person name="Parker C."/>
            <person name="Breidt F."/>
            <person name="Broadbent J.R."/>
            <person name="Hutkins R."/>
            <person name="O'Sullivan D."/>
            <person name="Steele J."/>
            <person name="Unlu G."/>
            <person name="Saier M.H. Jr."/>
            <person name="Klaenhammer T."/>
            <person name="Richardson P."/>
            <person name="Kozyavkin S."/>
            <person name="Weimer B.C."/>
            <person name="Mills D.A."/>
        </authorList>
    </citation>
    <scope>NUCLEOTIDE SEQUENCE [LARGE SCALE GENOMIC DNA]</scope>
    <source>
        <strain>ATCC BAA-331 / PSU-1</strain>
    </source>
</reference>
<dbReference type="EC" id="6.1.1.16" evidence="1"/>
<dbReference type="EMBL" id="CP000411">
    <property type="protein sequence ID" value="ABJ57414.1"/>
    <property type="molecule type" value="Genomic_DNA"/>
</dbReference>
<dbReference type="RefSeq" id="WP_002819374.1">
    <property type="nucleotide sequence ID" value="NC_008528.1"/>
</dbReference>
<dbReference type="SMR" id="Q04DQ8"/>
<dbReference type="STRING" id="203123.OEOE_1559"/>
<dbReference type="GeneID" id="75066470"/>
<dbReference type="KEGG" id="ooe:OEOE_1559"/>
<dbReference type="eggNOG" id="COG0215">
    <property type="taxonomic scope" value="Bacteria"/>
</dbReference>
<dbReference type="HOGENOM" id="CLU_013528_0_1_9"/>
<dbReference type="Proteomes" id="UP000000774">
    <property type="component" value="Chromosome"/>
</dbReference>
<dbReference type="GO" id="GO:0005829">
    <property type="term" value="C:cytosol"/>
    <property type="evidence" value="ECO:0007669"/>
    <property type="project" value="TreeGrafter"/>
</dbReference>
<dbReference type="GO" id="GO:0005524">
    <property type="term" value="F:ATP binding"/>
    <property type="evidence" value="ECO:0007669"/>
    <property type="project" value="UniProtKB-UniRule"/>
</dbReference>
<dbReference type="GO" id="GO:0004817">
    <property type="term" value="F:cysteine-tRNA ligase activity"/>
    <property type="evidence" value="ECO:0007669"/>
    <property type="project" value="UniProtKB-UniRule"/>
</dbReference>
<dbReference type="GO" id="GO:0008270">
    <property type="term" value="F:zinc ion binding"/>
    <property type="evidence" value="ECO:0007669"/>
    <property type="project" value="UniProtKB-UniRule"/>
</dbReference>
<dbReference type="GO" id="GO:0006423">
    <property type="term" value="P:cysteinyl-tRNA aminoacylation"/>
    <property type="evidence" value="ECO:0007669"/>
    <property type="project" value="UniProtKB-UniRule"/>
</dbReference>
<dbReference type="CDD" id="cd00672">
    <property type="entry name" value="CysRS_core"/>
    <property type="match status" value="1"/>
</dbReference>
<dbReference type="FunFam" id="3.40.50.620:FF:000130">
    <property type="entry name" value="Cysteine--tRNA ligase"/>
    <property type="match status" value="1"/>
</dbReference>
<dbReference type="Gene3D" id="1.20.120.1910">
    <property type="entry name" value="Cysteine-tRNA ligase, C-terminal anti-codon recognition domain"/>
    <property type="match status" value="1"/>
</dbReference>
<dbReference type="Gene3D" id="3.40.50.620">
    <property type="entry name" value="HUPs"/>
    <property type="match status" value="1"/>
</dbReference>
<dbReference type="HAMAP" id="MF_00041">
    <property type="entry name" value="Cys_tRNA_synth"/>
    <property type="match status" value="1"/>
</dbReference>
<dbReference type="InterPro" id="IPR015803">
    <property type="entry name" value="Cys-tRNA-ligase"/>
</dbReference>
<dbReference type="InterPro" id="IPR015273">
    <property type="entry name" value="Cys-tRNA-synt_Ia_DALR"/>
</dbReference>
<dbReference type="InterPro" id="IPR024909">
    <property type="entry name" value="Cys-tRNA/MSH_ligase"/>
</dbReference>
<dbReference type="InterPro" id="IPR056411">
    <property type="entry name" value="CysS_C"/>
</dbReference>
<dbReference type="InterPro" id="IPR014729">
    <property type="entry name" value="Rossmann-like_a/b/a_fold"/>
</dbReference>
<dbReference type="InterPro" id="IPR032678">
    <property type="entry name" value="tRNA-synt_1_cat_dom"/>
</dbReference>
<dbReference type="InterPro" id="IPR009080">
    <property type="entry name" value="tRNAsynth_Ia_anticodon-bd"/>
</dbReference>
<dbReference type="NCBIfam" id="TIGR00435">
    <property type="entry name" value="cysS"/>
    <property type="match status" value="1"/>
</dbReference>
<dbReference type="PANTHER" id="PTHR10890:SF3">
    <property type="entry name" value="CYSTEINE--TRNA LIGASE, CYTOPLASMIC"/>
    <property type="match status" value="1"/>
</dbReference>
<dbReference type="PANTHER" id="PTHR10890">
    <property type="entry name" value="CYSTEINYL-TRNA SYNTHETASE"/>
    <property type="match status" value="1"/>
</dbReference>
<dbReference type="Pfam" id="PF23493">
    <property type="entry name" value="CysS_C"/>
    <property type="match status" value="1"/>
</dbReference>
<dbReference type="Pfam" id="PF09190">
    <property type="entry name" value="DALR_2"/>
    <property type="match status" value="1"/>
</dbReference>
<dbReference type="Pfam" id="PF01406">
    <property type="entry name" value="tRNA-synt_1e"/>
    <property type="match status" value="1"/>
</dbReference>
<dbReference type="PRINTS" id="PR00983">
    <property type="entry name" value="TRNASYNTHCYS"/>
</dbReference>
<dbReference type="SMART" id="SM00840">
    <property type="entry name" value="DALR_2"/>
    <property type="match status" value="1"/>
</dbReference>
<dbReference type="SUPFAM" id="SSF47323">
    <property type="entry name" value="Anticodon-binding domain of a subclass of class I aminoacyl-tRNA synthetases"/>
    <property type="match status" value="1"/>
</dbReference>
<dbReference type="SUPFAM" id="SSF52374">
    <property type="entry name" value="Nucleotidylyl transferase"/>
    <property type="match status" value="1"/>
</dbReference>
<accession>Q04DQ8</accession>
<sequence>MLKVFNTATLKKEEFKPIVPGKITMYVCGPTVYNYIHVGNARSSIAFDTIRRYLLYRGYDVNFVSNFTDVDDKIINRAQEEGVSENAIASKYIKAFYEDTKPLNIIPATTRTRATEVIPDIIEFVSDLIDKGYAYESQGGVYFRVRKAGNYGLLAHENLEDLEVGASGRLDDGALALKEDPLDFALWKNEPRQVIKWDSPWGQGRPGWHIECSVMSTKYLGYTIDIHGGGIDLAFPHHTDEMAQSEAHTGKQFVHYWLHNGFVNVNNEKMSKSLGNFTTVHELLSSYDDPMAIRFLMTATHYRRPINYSSSELERARVELDRIRTAYRRLKNADFKIGDDPQIDQLVSKQTAAFVEAMDDDFNVANALAAIFELVRLANSYVDSGDVKDKSAQEILRQIAELIGVFGISGLETKKESLPKKIELLLKKRETARINKNWQQSDQLRDEIFSLGYKVSDSSNGQQVRKI</sequence>
<name>SYC_OENOB</name>